<dbReference type="EC" id="2.7.7.18" evidence="1"/>
<dbReference type="EMBL" id="BX571857">
    <property type="protein sequence ID" value="CAG43332.1"/>
    <property type="molecule type" value="Genomic_DNA"/>
</dbReference>
<dbReference type="RefSeq" id="WP_000725167.1">
    <property type="nucleotide sequence ID" value="NC_002953.3"/>
</dbReference>
<dbReference type="SMR" id="Q6G8X4"/>
<dbReference type="KEGG" id="sas:SAS1531"/>
<dbReference type="HOGENOM" id="CLU_069765_3_1_9"/>
<dbReference type="UniPathway" id="UPA00253">
    <property type="reaction ID" value="UER00332"/>
</dbReference>
<dbReference type="GO" id="GO:0005524">
    <property type="term" value="F:ATP binding"/>
    <property type="evidence" value="ECO:0007669"/>
    <property type="project" value="UniProtKB-KW"/>
</dbReference>
<dbReference type="GO" id="GO:0004515">
    <property type="term" value="F:nicotinate-nucleotide adenylyltransferase activity"/>
    <property type="evidence" value="ECO:0007669"/>
    <property type="project" value="UniProtKB-UniRule"/>
</dbReference>
<dbReference type="GO" id="GO:0009435">
    <property type="term" value="P:NAD biosynthetic process"/>
    <property type="evidence" value="ECO:0007669"/>
    <property type="project" value="UniProtKB-UniRule"/>
</dbReference>
<dbReference type="CDD" id="cd02165">
    <property type="entry name" value="NMNAT"/>
    <property type="match status" value="1"/>
</dbReference>
<dbReference type="FunFam" id="3.40.50.620:FF:000189">
    <property type="entry name" value="Probable nicotinate-nucleotide adenylyltransferase"/>
    <property type="match status" value="1"/>
</dbReference>
<dbReference type="Gene3D" id="3.40.50.620">
    <property type="entry name" value="HUPs"/>
    <property type="match status" value="1"/>
</dbReference>
<dbReference type="HAMAP" id="MF_00244">
    <property type="entry name" value="NaMN_adenylyltr"/>
    <property type="match status" value="1"/>
</dbReference>
<dbReference type="InterPro" id="IPR004821">
    <property type="entry name" value="Cyt_trans-like"/>
</dbReference>
<dbReference type="InterPro" id="IPR005248">
    <property type="entry name" value="NadD/NMNAT"/>
</dbReference>
<dbReference type="InterPro" id="IPR014729">
    <property type="entry name" value="Rossmann-like_a/b/a_fold"/>
</dbReference>
<dbReference type="NCBIfam" id="TIGR00482">
    <property type="entry name" value="nicotinate (nicotinamide) nucleotide adenylyltransferase"/>
    <property type="match status" value="1"/>
</dbReference>
<dbReference type="NCBIfam" id="NF000840">
    <property type="entry name" value="PRK00071.1-3"/>
    <property type="match status" value="1"/>
</dbReference>
<dbReference type="NCBIfam" id="NF000841">
    <property type="entry name" value="PRK00071.1-4"/>
    <property type="match status" value="1"/>
</dbReference>
<dbReference type="PANTHER" id="PTHR39321">
    <property type="entry name" value="NICOTINATE-NUCLEOTIDE ADENYLYLTRANSFERASE-RELATED"/>
    <property type="match status" value="1"/>
</dbReference>
<dbReference type="PANTHER" id="PTHR39321:SF3">
    <property type="entry name" value="PHOSPHOPANTETHEINE ADENYLYLTRANSFERASE"/>
    <property type="match status" value="1"/>
</dbReference>
<dbReference type="Pfam" id="PF01467">
    <property type="entry name" value="CTP_transf_like"/>
    <property type="match status" value="1"/>
</dbReference>
<dbReference type="SUPFAM" id="SSF52374">
    <property type="entry name" value="Nucleotidylyl transferase"/>
    <property type="match status" value="1"/>
</dbReference>
<accession>Q6G8X4</accession>
<gene>
    <name evidence="1" type="primary">nadD</name>
    <name type="ordered locus">SAS1531</name>
</gene>
<name>NADD_STAAS</name>
<sequence length="189" mass="22103">MKKIVLYGGQFNPIHTAHMIVASEVFHELQPDEFYFLPSFMSPLKKHNNFIDVQHRLTMIQMIIDELGFGDICDDEIKRGGQSYTYDTIKAFKEQHKDSELYFVIGTDQYNQLEKWYQIEYLKEMVTFVVVNRDKNSQNVENAMIAIQIPRVDISSTMIRQRVSEGKSIQVLVPKSVENYIKGEGLYEH</sequence>
<proteinExistence type="inferred from homology"/>
<reference key="1">
    <citation type="journal article" date="2004" name="Proc. Natl. Acad. Sci. U.S.A.">
        <title>Complete genomes of two clinical Staphylococcus aureus strains: evidence for the rapid evolution of virulence and drug resistance.</title>
        <authorList>
            <person name="Holden M.T.G."/>
            <person name="Feil E.J."/>
            <person name="Lindsay J.A."/>
            <person name="Peacock S.J."/>
            <person name="Day N.P.J."/>
            <person name="Enright M.C."/>
            <person name="Foster T.J."/>
            <person name="Moore C.E."/>
            <person name="Hurst L."/>
            <person name="Atkin R."/>
            <person name="Barron A."/>
            <person name="Bason N."/>
            <person name="Bentley S.D."/>
            <person name="Chillingworth C."/>
            <person name="Chillingworth T."/>
            <person name="Churcher C."/>
            <person name="Clark L."/>
            <person name="Corton C."/>
            <person name="Cronin A."/>
            <person name="Doggett J."/>
            <person name="Dowd L."/>
            <person name="Feltwell T."/>
            <person name="Hance Z."/>
            <person name="Harris B."/>
            <person name="Hauser H."/>
            <person name="Holroyd S."/>
            <person name="Jagels K."/>
            <person name="James K.D."/>
            <person name="Lennard N."/>
            <person name="Line A."/>
            <person name="Mayes R."/>
            <person name="Moule S."/>
            <person name="Mungall K."/>
            <person name="Ormond D."/>
            <person name="Quail M.A."/>
            <person name="Rabbinowitsch E."/>
            <person name="Rutherford K.M."/>
            <person name="Sanders M."/>
            <person name="Sharp S."/>
            <person name="Simmonds M."/>
            <person name="Stevens K."/>
            <person name="Whitehead S."/>
            <person name="Barrell B.G."/>
            <person name="Spratt B.G."/>
            <person name="Parkhill J."/>
        </authorList>
    </citation>
    <scope>NUCLEOTIDE SEQUENCE [LARGE SCALE GENOMIC DNA]</scope>
    <source>
        <strain>MSSA476</strain>
    </source>
</reference>
<feature type="chain" id="PRO_0000181447" description="Probable nicotinate-nucleotide adenylyltransferase">
    <location>
        <begin position="1"/>
        <end position="189"/>
    </location>
</feature>
<keyword id="KW-0067">ATP-binding</keyword>
<keyword id="KW-0520">NAD</keyword>
<keyword id="KW-0547">Nucleotide-binding</keyword>
<keyword id="KW-0548">Nucleotidyltransferase</keyword>
<keyword id="KW-0662">Pyridine nucleotide biosynthesis</keyword>
<keyword id="KW-0808">Transferase</keyword>
<evidence type="ECO:0000255" key="1">
    <source>
        <dbReference type="HAMAP-Rule" id="MF_00244"/>
    </source>
</evidence>
<organism>
    <name type="scientific">Staphylococcus aureus (strain MSSA476)</name>
    <dbReference type="NCBI Taxonomy" id="282459"/>
    <lineage>
        <taxon>Bacteria</taxon>
        <taxon>Bacillati</taxon>
        <taxon>Bacillota</taxon>
        <taxon>Bacilli</taxon>
        <taxon>Bacillales</taxon>
        <taxon>Staphylococcaceae</taxon>
        <taxon>Staphylococcus</taxon>
    </lineage>
</organism>
<comment type="function">
    <text evidence="1">Catalyzes the reversible adenylation of nicotinate mononucleotide (NaMN) to nicotinic acid adenine dinucleotide (NaAD).</text>
</comment>
<comment type="catalytic activity">
    <reaction evidence="1">
        <text>nicotinate beta-D-ribonucleotide + ATP + H(+) = deamido-NAD(+) + diphosphate</text>
        <dbReference type="Rhea" id="RHEA:22860"/>
        <dbReference type="ChEBI" id="CHEBI:15378"/>
        <dbReference type="ChEBI" id="CHEBI:30616"/>
        <dbReference type="ChEBI" id="CHEBI:33019"/>
        <dbReference type="ChEBI" id="CHEBI:57502"/>
        <dbReference type="ChEBI" id="CHEBI:58437"/>
        <dbReference type="EC" id="2.7.7.18"/>
    </reaction>
</comment>
<comment type="pathway">
    <text evidence="1">Cofactor biosynthesis; NAD(+) biosynthesis; deamido-NAD(+) from nicotinate D-ribonucleotide: step 1/1.</text>
</comment>
<comment type="similarity">
    <text evidence="1">Belongs to the NadD family.</text>
</comment>
<protein>
    <recommendedName>
        <fullName evidence="1">Probable nicotinate-nucleotide adenylyltransferase</fullName>
        <ecNumber evidence="1">2.7.7.18</ecNumber>
    </recommendedName>
    <alternativeName>
        <fullName evidence="1">Deamido-NAD(+) diphosphorylase</fullName>
    </alternativeName>
    <alternativeName>
        <fullName evidence="1">Deamido-NAD(+) pyrophosphorylase</fullName>
    </alternativeName>
    <alternativeName>
        <fullName evidence="1">Nicotinate mononucleotide adenylyltransferase</fullName>
        <shortName evidence="1">NaMN adenylyltransferase</shortName>
    </alternativeName>
</protein>